<organism>
    <name type="scientific">Neurospora crassa (strain ATCC 24698 / 74-OR23-1A / CBS 708.71 / DSM 1257 / FGSC 987)</name>
    <dbReference type="NCBI Taxonomy" id="367110"/>
    <lineage>
        <taxon>Eukaryota</taxon>
        <taxon>Fungi</taxon>
        <taxon>Dikarya</taxon>
        <taxon>Ascomycota</taxon>
        <taxon>Pezizomycotina</taxon>
        <taxon>Sordariomycetes</taxon>
        <taxon>Sordariomycetidae</taxon>
        <taxon>Sordariales</taxon>
        <taxon>Sordariaceae</taxon>
        <taxon>Neurospora</taxon>
    </lineage>
</organism>
<feature type="chain" id="PRO_0000064186" description="Peptidyl-prolyl isomerase cwc-27">
    <location>
        <begin position="1"/>
        <end position="541"/>
    </location>
</feature>
<feature type="domain" description="PPIase cyclophilin-type" evidence="2">
    <location>
        <begin position="11"/>
        <end position="193"/>
    </location>
</feature>
<feature type="region of interest" description="Disordered" evidence="3">
    <location>
        <begin position="199"/>
        <end position="443"/>
    </location>
</feature>
<feature type="region of interest" description="Disordered" evidence="3">
    <location>
        <begin position="513"/>
        <end position="541"/>
    </location>
</feature>
<feature type="compositionally biased region" description="Basic and acidic residues" evidence="3">
    <location>
        <begin position="279"/>
        <end position="307"/>
    </location>
</feature>
<feature type="compositionally biased region" description="Basic and acidic residues" evidence="3">
    <location>
        <begin position="316"/>
        <end position="348"/>
    </location>
</feature>
<feature type="compositionally biased region" description="Basic and acidic residues" evidence="3">
    <location>
        <begin position="361"/>
        <end position="374"/>
    </location>
</feature>
<feature type="compositionally biased region" description="Acidic residues" evidence="3">
    <location>
        <begin position="432"/>
        <end position="442"/>
    </location>
</feature>
<feature type="compositionally biased region" description="Basic and acidic residues" evidence="3">
    <location>
        <begin position="513"/>
        <end position="525"/>
    </location>
</feature>
<feature type="compositionally biased region" description="Basic and acidic residues" evidence="3">
    <location>
        <begin position="532"/>
        <end position="541"/>
    </location>
</feature>
<accession>Q7SBX8</accession>
<name>CWC27_NEUCR</name>
<protein>
    <recommendedName>
        <fullName>Peptidyl-prolyl isomerase cwc-27</fullName>
        <shortName>PPIase cwc-27</shortName>
        <ecNumber>5.2.1.8</ecNumber>
    </recommendedName>
    <alternativeName>
        <fullName>Rotamase cwc-27</fullName>
    </alternativeName>
</protein>
<comment type="function">
    <text evidence="1">PPIases accelerate the folding of proteins. It catalyzes the cis-trans isomerization of proline imidic peptide bonds in oligopeptides. Involved in pre-mRNA splicing (By similarity).</text>
</comment>
<comment type="catalytic activity">
    <reaction>
        <text>[protein]-peptidylproline (omega=180) = [protein]-peptidylproline (omega=0)</text>
        <dbReference type="Rhea" id="RHEA:16237"/>
        <dbReference type="Rhea" id="RHEA-COMP:10747"/>
        <dbReference type="Rhea" id="RHEA-COMP:10748"/>
        <dbReference type="ChEBI" id="CHEBI:83833"/>
        <dbReference type="ChEBI" id="CHEBI:83834"/>
        <dbReference type="EC" id="5.2.1.8"/>
    </reaction>
</comment>
<comment type="subunit">
    <text evidence="1">Associated with the spliceosome.</text>
</comment>
<comment type="subcellular location">
    <subcellularLocation>
        <location evidence="1">Cytoplasm</location>
    </subcellularLocation>
    <subcellularLocation>
        <location evidence="1">Nucleus</location>
    </subcellularLocation>
</comment>
<comment type="similarity">
    <text evidence="4">Belongs to the cyclophilin-type PPIase family. CWC27 subfamily.</text>
</comment>
<evidence type="ECO:0000250" key="1"/>
<evidence type="ECO:0000255" key="2">
    <source>
        <dbReference type="PROSITE-ProRule" id="PRU00156"/>
    </source>
</evidence>
<evidence type="ECO:0000256" key="3">
    <source>
        <dbReference type="SAM" id="MobiDB-lite"/>
    </source>
</evidence>
<evidence type="ECO:0000305" key="4"/>
<keyword id="KW-0963">Cytoplasm</keyword>
<keyword id="KW-0413">Isomerase</keyword>
<keyword id="KW-0507">mRNA processing</keyword>
<keyword id="KW-0508">mRNA splicing</keyword>
<keyword id="KW-0539">Nucleus</keyword>
<keyword id="KW-1185">Reference proteome</keyword>
<keyword id="KW-0697">Rotamase</keyword>
<keyword id="KW-0747">Spliceosome</keyword>
<gene>
    <name type="primary">cwc-27</name>
    <name type="ORF">B18P7.140</name>
    <name type="ORF">NCU08514</name>
</gene>
<proteinExistence type="inferred from homology"/>
<dbReference type="EC" id="5.2.1.8"/>
<dbReference type="EMBL" id="CM002237">
    <property type="protein sequence ID" value="EAA33928.1"/>
    <property type="molecule type" value="Genomic_DNA"/>
</dbReference>
<dbReference type="EMBL" id="BX842594">
    <property type="protein sequence ID" value="CAE75687.1"/>
    <property type="molecule type" value="Genomic_DNA"/>
</dbReference>
<dbReference type="RefSeq" id="XP_963164.1">
    <property type="nucleotide sequence ID" value="XM_958071.2"/>
</dbReference>
<dbReference type="SMR" id="Q7SBX8"/>
<dbReference type="STRING" id="367110.Q7SBX8"/>
<dbReference type="PaxDb" id="5141-EFNCRP00000008494"/>
<dbReference type="EnsemblFungi" id="EAA33928">
    <property type="protein sequence ID" value="EAA33928"/>
    <property type="gene ID" value="NCU08514"/>
</dbReference>
<dbReference type="GeneID" id="3879312"/>
<dbReference type="KEGG" id="ncr:NCU08514"/>
<dbReference type="VEuPathDB" id="FungiDB:NCU08514"/>
<dbReference type="HOGENOM" id="CLU_012062_14_5_1"/>
<dbReference type="InParanoid" id="Q7SBX8"/>
<dbReference type="OMA" id="CKNFLQH"/>
<dbReference type="OrthoDB" id="442970at2759"/>
<dbReference type="Proteomes" id="UP000001805">
    <property type="component" value="Chromosome 6, Linkage Group II"/>
</dbReference>
<dbReference type="GO" id="GO:0071013">
    <property type="term" value="C:catalytic step 2 spliceosome"/>
    <property type="evidence" value="ECO:0000318"/>
    <property type="project" value="GO_Central"/>
</dbReference>
<dbReference type="GO" id="GO:0005737">
    <property type="term" value="C:cytoplasm"/>
    <property type="evidence" value="ECO:0007669"/>
    <property type="project" value="UniProtKB-SubCell"/>
</dbReference>
<dbReference type="GO" id="GO:0003755">
    <property type="term" value="F:peptidyl-prolyl cis-trans isomerase activity"/>
    <property type="evidence" value="ECO:0007669"/>
    <property type="project" value="UniProtKB-KW"/>
</dbReference>
<dbReference type="GO" id="GO:0006397">
    <property type="term" value="P:mRNA processing"/>
    <property type="evidence" value="ECO:0007669"/>
    <property type="project" value="UniProtKB-KW"/>
</dbReference>
<dbReference type="GO" id="GO:0006457">
    <property type="term" value="P:protein folding"/>
    <property type="evidence" value="ECO:0000318"/>
    <property type="project" value="GO_Central"/>
</dbReference>
<dbReference type="GO" id="GO:0008380">
    <property type="term" value="P:RNA splicing"/>
    <property type="evidence" value="ECO:0007669"/>
    <property type="project" value="UniProtKB-KW"/>
</dbReference>
<dbReference type="CDD" id="cd01925">
    <property type="entry name" value="cyclophilin_CeCYP16-like"/>
    <property type="match status" value="1"/>
</dbReference>
<dbReference type="FunFam" id="2.40.100.10:FF:000034">
    <property type="entry name" value="Peptidyl-prolyl isomerase CWC27 protein"/>
    <property type="match status" value="1"/>
</dbReference>
<dbReference type="Gene3D" id="2.40.100.10">
    <property type="entry name" value="Cyclophilin-like"/>
    <property type="match status" value="1"/>
</dbReference>
<dbReference type="InterPro" id="IPR029000">
    <property type="entry name" value="Cyclophilin-like_dom_sf"/>
</dbReference>
<dbReference type="InterPro" id="IPR020892">
    <property type="entry name" value="Cyclophilin-type_PPIase_CS"/>
</dbReference>
<dbReference type="InterPro" id="IPR002130">
    <property type="entry name" value="Cyclophilin-type_PPIase_dom"/>
</dbReference>
<dbReference type="InterPro" id="IPR044666">
    <property type="entry name" value="Cyclophilin_A-like"/>
</dbReference>
<dbReference type="PANTHER" id="PTHR45625">
    <property type="entry name" value="PEPTIDYL-PROLYL CIS-TRANS ISOMERASE-RELATED"/>
    <property type="match status" value="1"/>
</dbReference>
<dbReference type="PANTHER" id="PTHR45625:SF6">
    <property type="entry name" value="SPLICEOSOME-ASSOCIATED PROTEIN CWC27 HOMOLOG"/>
    <property type="match status" value="1"/>
</dbReference>
<dbReference type="Pfam" id="PF00160">
    <property type="entry name" value="Pro_isomerase"/>
    <property type="match status" value="1"/>
</dbReference>
<dbReference type="PRINTS" id="PR00153">
    <property type="entry name" value="CSAPPISMRASE"/>
</dbReference>
<dbReference type="SUPFAM" id="SSF50891">
    <property type="entry name" value="Cyclophilin-like"/>
    <property type="match status" value="1"/>
</dbReference>
<dbReference type="PROSITE" id="PS00170">
    <property type="entry name" value="CSA_PPIASE_1"/>
    <property type="match status" value="1"/>
</dbReference>
<dbReference type="PROSITE" id="PS50072">
    <property type="entry name" value="CSA_PPIASE_2"/>
    <property type="match status" value="1"/>
</dbReference>
<reference key="1">
    <citation type="journal article" date="2003" name="Nucleic Acids Res.">
        <title>What's in the genome of a filamentous fungus? Analysis of the Neurospora genome sequence.</title>
        <authorList>
            <person name="Mannhaupt G."/>
            <person name="Montrone C."/>
            <person name="Haase D."/>
            <person name="Mewes H.-W."/>
            <person name="Aign V."/>
            <person name="Hoheisel J.D."/>
            <person name="Fartmann B."/>
            <person name="Nyakatura G."/>
            <person name="Kempken F."/>
            <person name="Maier J."/>
            <person name="Schulte U."/>
        </authorList>
    </citation>
    <scope>NUCLEOTIDE SEQUENCE [LARGE SCALE GENOMIC DNA]</scope>
    <source>
        <strain>ATCC 24698 / 74-OR23-1A / CBS 708.71 / DSM 1257 / FGSC 987</strain>
    </source>
</reference>
<reference key="2">
    <citation type="journal article" date="2003" name="Nature">
        <title>The genome sequence of the filamentous fungus Neurospora crassa.</title>
        <authorList>
            <person name="Galagan J.E."/>
            <person name="Calvo S.E."/>
            <person name="Borkovich K.A."/>
            <person name="Selker E.U."/>
            <person name="Read N.D."/>
            <person name="Jaffe D.B."/>
            <person name="FitzHugh W."/>
            <person name="Ma L.-J."/>
            <person name="Smirnov S."/>
            <person name="Purcell S."/>
            <person name="Rehman B."/>
            <person name="Elkins T."/>
            <person name="Engels R."/>
            <person name="Wang S."/>
            <person name="Nielsen C.B."/>
            <person name="Butler J."/>
            <person name="Endrizzi M."/>
            <person name="Qui D."/>
            <person name="Ianakiev P."/>
            <person name="Bell-Pedersen D."/>
            <person name="Nelson M.A."/>
            <person name="Werner-Washburne M."/>
            <person name="Selitrennikoff C.P."/>
            <person name="Kinsey J.A."/>
            <person name="Braun E.L."/>
            <person name="Zelter A."/>
            <person name="Schulte U."/>
            <person name="Kothe G.O."/>
            <person name="Jedd G."/>
            <person name="Mewes H.-W."/>
            <person name="Staben C."/>
            <person name="Marcotte E."/>
            <person name="Greenberg D."/>
            <person name="Roy A."/>
            <person name="Foley K."/>
            <person name="Naylor J."/>
            <person name="Stange-Thomann N."/>
            <person name="Barrett R."/>
            <person name="Gnerre S."/>
            <person name="Kamal M."/>
            <person name="Kamvysselis M."/>
            <person name="Mauceli E.W."/>
            <person name="Bielke C."/>
            <person name="Rudd S."/>
            <person name="Frishman D."/>
            <person name="Krystofova S."/>
            <person name="Rasmussen C."/>
            <person name="Metzenberg R.L."/>
            <person name="Perkins D.D."/>
            <person name="Kroken S."/>
            <person name="Cogoni C."/>
            <person name="Macino G."/>
            <person name="Catcheside D.E.A."/>
            <person name="Li W."/>
            <person name="Pratt R.J."/>
            <person name="Osmani S.A."/>
            <person name="DeSouza C.P.C."/>
            <person name="Glass N.L."/>
            <person name="Orbach M.J."/>
            <person name="Berglund J.A."/>
            <person name="Voelker R."/>
            <person name="Yarden O."/>
            <person name="Plamann M."/>
            <person name="Seiler S."/>
            <person name="Dunlap J.C."/>
            <person name="Radford A."/>
            <person name="Aramayo R."/>
            <person name="Natvig D.O."/>
            <person name="Alex L.A."/>
            <person name="Mannhaupt G."/>
            <person name="Ebbole D.J."/>
            <person name="Freitag M."/>
            <person name="Paulsen I."/>
            <person name="Sachs M.S."/>
            <person name="Lander E.S."/>
            <person name="Nusbaum C."/>
            <person name="Birren B.W."/>
        </authorList>
    </citation>
    <scope>NUCLEOTIDE SEQUENCE [LARGE SCALE GENOMIC DNA]</scope>
    <source>
        <strain>ATCC 24698 / 74-OR23-1A / CBS 708.71 / DSM 1257 / FGSC 987</strain>
    </source>
</reference>
<sequence>MSAIYNLEPQPTASAIIHTTQGEIAVELFAKQTPLTCRNFLQLALDGYYDNTIFHRLIPGFIVQGGDPSGTGHGGESIYDNGALSGDLDPWPMDQRRGKNAGPHGVNFKDEFHSRLKFNRRGLLGMANEGAPDTNSSQFFFTLGKADELTGKNTMFGRVAGDTIYNLAKIGEAEVEEGGERPLYPIKITRIEILINPFDDMQKREKKPRPQQISRPTPAEKKQKKRKGGKQLLSFGDEVGDEDGEELPLPKKPKFDTRIVADLDQDDSSKQSASKKSSAKRDAKPVANDVPKREEKPEPKPVKESRRSPSPQPVAQKKEQPPKKHYSEHSSPEPEEPKKKSLLEKTNEEIAALKASMKRTIHSEPVKQEKKKSALEQLIPDTAIRGRKRRPGASSNPTREEQEALDLLKSFKAKIETAPPEKNAAQPAVNPDVEDGEQDGQADEEKVCDLHFIANCQSCKAWDKVEDNEDSGDEGWMSHKLSFAADKLGKDLSYRKKAEEELVVIDPLAKARTLKEEKKATRDAKTGGSSRAWDRGRRDRH</sequence>